<gene>
    <name evidence="1" type="primary">dnaJ</name>
    <name type="ordered locus">HD_0188</name>
</gene>
<evidence type="ECO:0000255" key="1">
    <source>
        <dbReference type="HAMAP-Rule" id="MF_01152"/>
    </source>
</evidence>
<protein>
    <recommendedName>
        <fullName evidence="1">Chaperone protein DnaJ</fullName>
    </recommendedName>
</protein>
<reference key="1">
    <citation type="submission" date="1995-05" db="EMBL/GenBank/DDBJ databases">
        <title>A high basal level of the molecular chaperonin, GroEL, enables Haemophilus ducreyi to survive in a stressful environment.</title>
        <authorList>
            <person name="Parsons L.M."/>
        </authorList>
    </citation>
    <scope>NUCLEOTIDE SEQUENCE [GENOMIC DNA]</scope>
    <source>
        <strain>35000HP / ATCC 700724</strain>
    </source>
</reference>
<reference key="2">
    <citation type="submission" date="2003-06" db="EMBL/GenBank/DDBJ databases">
        <title>The complete genome sequence of Haemophilus ducreyi.</title>
        <authorList>
            <person name="Munson R.S. Jr."/>
            <person name="Ray W.C."/>
            <person name="Mahairas G."/>
            <person name="Sabo P."/>
            <person name="Mungur R."/>
            <person name="Johnson L."/>
            <person name="Nguyen D."/>
            <person name="Wang J."/>
            <person name="Forst C."/>
            <person name="Hood L."/>
        </authorList>
    </citation>
    <scope>NUCLEOTIDE SEQUENCE [LARGE SCALE GENOMIC DNA]</scope>
    <source>
        <strain>35000HP / ATCC 700724</strain>
    </source>
</reference>
<organism>
    <name type="scientific">Haemophilus ducreyi (strain 35000HP / ATCC 700724)</name>
    <dbReference type="NCBI Taxonomy" id="233412"/>
    <lineage>
        <taxon>Bacteria</taxon>
        <taxon>Pseudomonadati</taxon>
        <taxon>Pseudomonadota</taxon>
        <taxon>Gammaproteobacteria</taxon>
        <taxon>Pasteurellales</taxon>
        <taxon>Pasteurellaceae</taxon>
        <taxon>Haemophilus</taxon>
    </lineage>
</organism>
<dbReference type="EMBL" id="U25996">
    <property type="protein sequence ID" value="AAA67299.1"/>
    <property type="molecule type" value="Genomic_DNA"/>
</dbReference>
<dbReference type="EMBL" id="AE017143">
    <property type="protein sequence ID" value="AAP95181.1"/>
    <property type="molecule type" value="Genomic_DNA"/>
</dbReference>
<dbReference type="RefSeq" id="WP_010944235.1">
    <property type="nucleotide sequence ID" value="NC_002940.2"/>
</dbReference>
<dbReference type="SMR" id="P48208"/>
<dbReference type="STRING" id="233412.HD_0188"/>
<dbReference type="KEGG" id="hdu:HD_0188"/>
<dbReference type="eggNOG" id="COG0484">
    <property type="taxonomic scope" value="Bacteria"/>
</dbReference>
<dbReference type="HOGENOM" id="CLU_017633_0_7_6"/>
<dbReference type="OrthoDB" id="9779889at2"/>
<dbReference type="Proteomes" id="UP000001022">
    <property type="component" value="Chromosome"/>
</dbReference>
<dbReference type="GO" id="GO:0005737">
    <property type="term" value="C:cytoplasm"/>
    <property type="evidence" value="ECO:0007669"/>
    <property type="project" value="UniProtKB-SubCell"/>
</dbReference>
<dbReference type="GO" id="GO:0005524">
    <property type="term" value="F:ATP binding"/>
    <property type="evidence" value="ECO:0007669"/>
    <property type="project" value="InterPro"/>
</dbReference>
<dbReference type="GO" id="GO:0031072">
    <property type="term" value="F:heat shock protein binding"/>
    <property type="evidence" value="ECO:0007669"/>
    <property type="project" value="InterPro"/>
</dbReference>
<dbReference type="GO" id="GO:0051082">
    <property type="term" value="F:unfolded protein binding"/>
    <property type="evidence" value="ECO:0007669"/>
    <property type="project" value="UniProtKB-UniRule"/>
</dbReference>
<dbReference type="GO" id="GO:0008270">
    <property type="term" value="F:zinc ion binding"/>
    <property type="evidence" value="ECO:0007669"/>
    <property type="project" value="UniProtKB-UniRule"/>
</dbReference>
<dbReference type="GO" id="GO:0051085">
    <property type="term" value="P:chaperone cofactor-dependent protein refolding"/>
    <property type="evidence" value="ECO:0007669"/>
    <property type="project" value="TreeGrafter"/>
</dbReference>
<dbReference type="GO" id="GO:0006260">
    <property type="term" value="P:DNA replication"/>
    <property type="evidence" value="ECO:0007669"/>
    <property type="project" value="UniProtKB-KW"/>
</dbReference>
<dbReference type="GO" id="GO:0042026">
    <property type="term" value="P:protein refolding"/>
    <property type="evidence" value="ECO:0007669"/>
    <property type="project" value="TreeGrafter"/>
</dbReference>
<dbReference type="GO" id="GO:0009408">
    <property type="term" value="P:response to heat"/>
    <property type="evidence" value="ECO:0007669"/>
    <property type="project" value="InterPro"/>
</dbReference>
<dbReference type="CDD" id="cd06257">
    <property type="entry name" value="DnaJ"/>
    <property type="match status" value="1"/>
</dbReference>
<dbReference type="CDD" id="cd10747">
    <property type="entry name" value="DnaJ_C"/>
    <property type="match status" value="1"/>
</dbReference>
<dbReference type="CDD" id="cd10719">
    <property type="entry name" value="DnaJ_zf"/>
    <property type="match status" value="1"/>
</dbReference>
<dbReference type="FunFam" id="1.10.287.110:FF:000034">
    <property type="entry name" value="Chaperone protein DnaJ"/>
    <property type="match status" value="1"/>
</dbReference>
<dbReference type="FunFam" id="2.10.230.10:FF:000002">
    <property type="entry name" value="Molecular chaperone DnaJ"/>
    <property type="match status" value="1"/>
</dbReference>
<dbReference type="FunFam" id="2.60.260.20:FF:000004">
    <property type="entry name" value="Molecular chaperone DnaJ"/>
    <property type="match status" value="1"/>
</dbReference>
<dbReference type="Gene3D" id="1.10.287.110">
    <property type="entry name" value="DnaJ domain"/>
    <property type="match status" value="1"/>
</dbReference>
<dbReference type="Gene3D" id="2.10.230.10">
    <property type="entry name" value="Heat shock protein DnaJ, cysteine-rich domain"/>
    <property type="match status" value="1"/>
</dbReference>
<dbReference type="Gene3D" id="2.60.260.20">
    <property type="entry name" value="Urease metallochaperone UreE, N-terminal domain"/>
    <property type="match status" value="2"/>
</dbReference>
<dbReference type="HAMAP" id="MF_01152">
    <property type="entry name" value="DnaJ"/>
    <property type="match status" value="1"/>
</dbReference>
<dbReference type="InterPro" id="IPR012724">
    <property type="entry name" value="DnaJ"/>
</dbReference>
<dbReference type="InterPro" id="IPR002939">
    <property type="entry name" value="DnaJ_C"/>
</dbReference>
<dbReference type="InterPro" id="IPR001623">
    <property type="entry name" value="DnaJ_domain"/>
</dbReference>
<dbReference type="InterPro" id="IPR018253">
    <property type="entry name" value="DnaJ_domain_CS"/>
</dbReference>
<dbReference type="InterPro" id="IPR008971">
    <property type="entry name" value="HSP40/DnaJ_pept-bd"/>
</dbReference>
<dbReference type="InterPro" id="IPR001305">
    <property type="entry name" value="HSP_DnaJ_Cys-rich_dom"/>
</dbReference>
<dbReference type="InterPro" id="IPR036410">
    <property type="entry name" value="HSP_DnaJ_Cys-rich_dom_sf"/>
</dbReference>
<dbReference type="InterPro" id="IPR036869">
    <property type="entry name" value="J_dom_sf"/>
</dbReference>
<dbReference type="NCBIfam" id="TIGR02349">
    <property type="entry name" value="DnaJ_bact"/>
    <property type="match status" value="1"/>
</dbReference>
<dbReference type="NCBIfam" id="NF008035">
    <property type="entry name" value="PRK10767.1"/>
    <property type="match status" value="1"/>
</dbReference>
<dbReference type="PANTHER" id="PTHR43096:SF48">
    <property type="entry name" value="CHAPERONE PROTEIN DNAJ"/>
    <property type="match status" value="1"/>
</dbReference>
<dbReference type="PANTHER" id="PTHR43096">
    <property type="entry name" value="DNAJ HOMOLOG 1, MITOCHONDRIAL-RELATED"/>
    <property type="match status" value="1"/>
</dbReference>
<dbReference type="Pfam" id="PF00226">
    <property type="entry name" value="DnaJ"/>
    <property type="match status" value="1"/>
</dbReference>
<dbReference type="Pfam" id="PF01556">
    <property type="entry name" value="DnaJ_C"/>
    <property type="match status" value="1"/>
</dbReference>
<dbReference type="Pfam" id="PF00684">
    <property type="entry name" value="DnaJ_CXXCXGXG"/>
    <property type="match status" value="1"/>
</dbReference>
<dbReference type="PRINTS" id="PR00625">
    <property type="entry name" value="JDOMAIN"/>
</dbReference>
<dbReference type="SMART" id="SM00271">
    <property type="entry name" value="DnaJ"/>
    <property type="match status" value="1"/>
</dbReference>
<dbReference type="SUPFAM" id="SSF46565">
    <property type="entry name" value="Chaperone J-domain"/>
    <property type="match status" value="1"/>
</dbReference>
<dbReference type="SUPFAM" id="SSF57938">
    <property type="entry name" value="DnaJ/Hsp40 cysteine-rich domain"/>
    <property type="match status" value="1"/>
</dbReference>
<dbReference type="SUPFAM" id="SSF49493">
    <property type="entry name" value="HSP40/DnaJ peptide-binding domain"/>
    <property type="match status" value="2"/>
</dbReference>
<dbReference type="PROSITE" id="PS00636">
    <property type="entry name" value="DNAJ_1"/>
    <property type="match status" value="1"/>
</dbReference>
<dbReference type="PROSITE" id="PS50076">
    <property type="entry name" value="DNAJ_2"/>
    <property type="match status" value="1"/>
</dbReference>
<dbReference type="PROSITE" id="PS51188">
    <property type="entry name" value="ZF_CR"/>
    <property type="match status" value="1"/>
</dbReference>
<proteinExistence type="inferred from homology"/>
<keyword id="KW-0143">Chaperone</keyword>
<keyword id="KW-0963">Cytoplasm</keyword>
<keyword id="KW-0235">DNA replication</keyword>
<keyword id="KW-0479">Metal-binding</keyword>
<keyword id="KW-1185">Reference proteome</keyword>
<keyword id="KW-0677">Repeat</keyword>
<keyword id="KW-0346">Stress response</keyword>
<keyword id="KW-0862">Zinc</keyword>
<keyword id="KW-0863">Zinc-finger</keyword>
<sequence length="377" mass="41027">MAKKDYYEVLGLQKGATEKDIKRAYKRLAAKYHPDKNQGSKDSEEKFKQITEAYEILTDDQKRAAYDQYGHAAFEQGSSNGGFNGFGGGFGGFEDIFSEMFGGGFGGGSRRQHVVRGQDLRYDIEISLEEAVKGCKKDIRLSTLAECDNCHGTGAEAGTKVENCPHCHGAGRIRRQQGFFVTEAVCPSCHGTGKKIEKPCHSCHGDGRVQKAKNLSVTIPAGVDTGNQLRLSGEGEAGENGAPAGDLYVVIHVREHNIFTRDGANLYCEVPISFSMAALGGEIEVPTLDGKLKLKIPTETQTGKLFRVRGKGVVSPRGGYAGDLICKVVVETPVQLNEEQKELLRQLEISLDGKANHRPQQAGFLDSVKNFFTHLGK</sequence>
<feature type="chain" id="PRO_0000070793" description="Chaperone protein DnaJ">
    <location>
        <begin position="1"/>
        <end position="377"/>
    </location>
</feature>
<feature type="domain" description="J" evidence="1">
    <location>
        <begin position="5"/>
        <end position="70"/>
    </location>
</feature>
<feature type="repeat" description="CXXCXGXG motif">
    <location>
        <begin position="147"/>
        <end position="154"/>
    </location>
</feature>
<feature type="repeat" description="CXXCXGXG motif">
    <location>
        <begin position="164"/>
        <end position="171"/>
    </location>
</feature>
<feature type="repeat" description="CXXCXGXG motif">
    <location>
        <begin position="186"/>
        <end position="193"/>
    </location>
</feature>
<feature type="repeat" description="CXXCXGXG motif">
    <location>
        <begin position="200"/>
        <end position="207"/>
    </location>
</feature>
<feature type="zinc finger region" description="CR-type" evidence="1">
    <location>
        <begin position="134"/>
        <end position="212"/>
    </location>
</feature>
<feature type="binding site" evidence="1">
    <location>
        <position position="147"/>
    </location>
    <ligand>
        <name>Zn(2+)</name>
        <dbReference type="ChEBI" id="CHEBI:29105"/>
        <label>1</label>
    </ligand>
</feature>
<feature type="binding site" evidence="1">
    <location>
        <position position="150"/>
    </location>
    <ligand>
        <name>Zn(2+)</name>
        <dbReference type="ChEBI" id="CHEBI:29105"/>
        <label>1</label>
    </ligand>
</feature>
<feature type="binding site" evidence="1">
    <location>
        <position position="164"/>
    </location>
    <ligand>
        <name>Zn(2+)</name>
        <dbReference type="ChEBI" id="CHEBI:29105"/>
        <label>2</label>
    </ligand>
</feature>
<feature type="binding site" evidence="1">
    <location>
        <position position="167"/>
    </location>
    <ligand>
        <name>Zn(2+)</name>
        <dbReference type="ChEBI" id="CHEBI:29105"/>
        <label>2</label>
    </ligand>
</feature>
<feature type="binding site" evidence="1">
    <location>
        <position position="186"/>
    </location>
    <ligand>
        <name>Zn(2+)</name>
        <dbReference type="ChEBI" id="CHEBI:29105"/>
        <label>2</label>
    </ligand>
</feature>
<feature type="binding site" evidence="1">
    <location>
        <position position="189"/>
    </location>
    <ligand>
        <name>Zn(2+)</name>
        <dbReference type="ChEBI" id="CHEBI:29105"/>
        <label>2</label>
    </ligand>
</feature>
<feature type="binding site" evidence="1">
    <location>
        <position position="200"/>
    </location>
    <ligand>
        <name>Zn(2+)</name>
        <dbReference type="ChEBI" id="CHEBI:29105"/>
        <label>1</label>
    </ligand>
</feature>
<feature type="binding site" evidence="1">
    <location>
        <position position="203"/>
    </location>
    <ligand>
        <name>Zn(2+)</name>
        <dbReference type="ChEBI" id="CHEBI:29105"/>
        <label>1</label>
    </ligand>
</feature>
<name>DNAJ_HAEDU</name>
<accession>P48208</accession>
<comment type="function">
    <text evidence="1">Participates actively in the response to hyperosmotic and heat shock by preventing the aggregation of stress-denatured proteins and by disaggregating proteins, also in an autonomous, DnaK-independent fashion. Unfolded proteins bind initially to DnaJ; upon interaction with the DnaJ-bound protein, DnaK hydrolyzes its bound ATP, resulting in the formation of a stable complex. GrpE releases ADP from DnaK; ATP binding to DnaK triggers the release of the substrate protein, thus completing the reaction cycle. Several rounds of ATP-dependent interactions between DnaJ, DnaK and GrpE are required for fully efficient folding. Also involved, together with DnaK and GrpE, in the DNA replication of plasmids through activation of initiation proteins.</text>
</comment>
<comment type="cofactor">
    <cofactor evidence="1">
        <name>Zn(2+)</name>
        <dbReference type="ChEBI" id="CHEBI:29105"/>
    </cofactor>
    <text evidence="1">Binds 2 Zn(2+) ions per monomer.</text>
</comment>
<comment type="subunit">
    <text evidence="1">Homodimer.</text>
</comment>
<comment type="subcellular location">
    <subcellularLocation>
        <location evidence="1">Cytoplasm</location>
    </subcellularLocation>
</comment>
<comment type="domain">
    <text evidence="1">The J domain is necessary and sufficient to stimulate DnaK ATPase activity. Zinc center 1 plays an important role in the autonomous, DnaK-independent chaperone activity of DnaJ. Zinc center 2 is essential for interaction with DnaK and for DnaJ activity.</text>
</comment>
<comment type="similarity">
    <text evidence="1">Belongs to the DnaJ family.</text>
</comment>